<name>TYSY1_BACSU</name>
<keyword id="KW-0002">3D-structure</keyword>
<keyword id="KW-0963">Cytoplasm</keyword>
<keyword id="KW-0489">Methyltransferase</keyword>
<keyword id="KW-0545">Nucleotide biosynthesis</keyword>
<keyword id="KW-1185">Reference proteome</keyword>
<keyword id="KW-0808">Transferase</keyword>
<gene>
    <name evidence="1" type="primary">thyA1</name>
    <name type="ordered locus">BSU17680</name>
</gene>
<protein>
    <recommendedName>
        <fullName evidence="1">Thymidylate synthase 1</fullName>
        <shortName evidence="1">TS 1</shortName>
        <shortName evidence="1">TSase 1</shortName>
        <ecNumber evidence="1">2.1.1.45</ecNumber>
    </recommendedName>
    <alternativeName>
        <fullName evidence="2">Thymidylate synthase A</fullName>
        <shortName evidence="2">TS A</shortName>
        <shortName evidence="2">TSase A</shortName>
    </alternativeName>
</protein>
<feature type="chain" id="PRO_0000140931" description="Thymidylate synthase 1">
    <location>
        <begin position="1"/>
        <end position="279"/>
    </location>
</feature>
<feature type="active site" description="Nucleophile" evidence="1">
    <location>
        <position position="161"/>
    </location>
</feature>
<feature type="binding site" evidence="1">
    <location>
        <begin position="141"/>
        <end position="142"/>
    </location>
    <ligand>
        <name>dUMP</name>
        <dbReference type="ChEBI" id="CHEBI:246422"/>
        <note>ligand shared between dimeric partners</note>
    </ligand>
</feature>
<feature type="binding site" description="in other chain" evidence="1">
    <location>
        <begin position="181"/>
        <end position="184"/>
    </location>
    <ligand>
        <name>dUMP</name>
        <dbReference type="ChEBI" id="CHEBI:246422"/>
        <note>ligand shared between dimeric partners</note>
    </ligand>
</feature>
<feature type="binding site" evidence="1">
    <location>
        <position position="184"/>
    </location>
    <ligand>
        <name>(6R)-5,10-methylene-5,6,7,8-tetrahydrofolate</name>
        <dbReference type="ChEBI" id="CHEBI:15636"/>
    </ligand>
</feature>
<feature type="binding site" description="in other chain" evidence="1">
    <location>
        <position position="192"/>
    </location>
    <ligand>
        <name>dUMP</name>
        <dbReference type="ChEBI" id="CHEBI:246422"/>
        <note>ligand shared between dimeric partners</note>
    </ligand>
</feature>
<feature type="binding site" description="in other chain" evidence="1">
    <location>
        <begin position="222"/>
        <end position="224"/>
    </location>
    <ligand>
        <name>dUMP</name>
        <dbReference type="ChEBI" id="CHEBI:246422"/>
        <note>ligand shared between dimeric partners</note>
    </ligand>
</feature>
<feature type="binding site" evidence="1">
    <location>
        <position position="278"/>
    </location>
    <ligand>
        <name>(6R)-5,10-methylene-5,6,7,8-tetrahydrofolate</name>
        <dbReference type="ChEBI" id="CHEBI:15636"/>
    </ligand>
</feature>
<feature type="sequence variant" description="In strain: ATCC 6633.">
    <original>ND</original>
    <variation>TE</variation>
    <location>
        <begin position="84"/>
        <end position="85"/>
    </location>
</feature>
<feature type="sequence variant" description="In strain: ATCC 6633.">
    <original>M</original>
    <variation>K</variation>
    <location>
        <position position="88"/>
    </location>
</feature>
<feature type="sequence variant" description="In strain: ATCC 6633.">
    <original>S</original>
    <variation>N</variation>
    <location>
        <position position="118"/>
    </location>
</feature>
<feature type="sequence variant" description="In strain: ATCC 6633.">
    <original>A</original>
    <variation>S</variation>
    <location>
        <position position="155"/>
    </location>
</feature>
<feature type="sequence variant" description="In strain: ATCC 6633.">
    <original>H</original>
    <variation>Q</variation>
    <location>
        <position position="171"/>
    </location>
</feature>
<feature type="helix" evidence="4">
    <location>
        <begin position="4"/>
        <end position="18"/>
    </location>
</feature>
<feature type="helix" evidence="5">
    <location>
        <begin position="22"/>
        <end position="24"/>
    </location>
</feature>
<feature type="turn" evidence="4">
    <location>
        <begin position="32"/>
        <end position="34"/>
    </location>
</feature>
<feature type="strand" evidence="4">
    <location>
        <begin position="40"/>
        <end position="50"/>
    </location>
</feature>
<feature type="strand" evidence="4">
    <location>
        <begin position="52"/>
        <end position="54"/>
    </location>
</feature>
<feature type="strand" evidence="4">
    <location>
        <begin position="59"/>
        <end position="61"/>
    </location>
</feature>
<feature type="helix" evidence="4">
    <location>
        <begin position="65"/>
        <end position="76"/>
    </location>
</feature>
<feature type="helix" evidence="4">
    <location>
        <begin position="83"/>
        <end position="87"/>
    </location>
</feature>
<feature type="turn" evidence="4">
    <location>
        <begin position="88"/>
        <end position="90"/>
    </location>
</feature>
<feature type="helix" evidence="4">
    <location>
        <begin position="95"/>
        <end position="97"/>
    </location>
</feature>
<feature type="strand" evidence="3">
    <location>
        <begin position="100"/>
        <end position="103"/>
    </location>
</feature>
<feature type="strand" evidence="5">
    <location>
        <begin position="105"/>
        <end position="107"/>
    </location>
</feature>
<feature type="helix" evidence="4">
    <location>
        <begin position="109"/>
        <end position="113"/>
    </location>
</feature>
<feature type="strand" evidence="4">
    <location>
        <begin position="117"/>
        <end position="119"/>
    </location>
</feature>
<feature type="strand" evidence="4">
    <location>
        <begin position="122"/>
        <end position="124"/>
    </location>
</feature>
<feature type="helix" evidence="4">
    <location>
        <begin position="126"/>
        <end position="136"/>
    </location>
</feature>
<feature type="strand" evidence="4">
    <location>
        <begin position="144"/>
        <end position="147"/>
    </location>
</feature>
<feature type="turn" evidence="4">
    <location>
        <begin position="150"/>
        <end position="152"/>
    </location>
</feature>
<feature type="helix" evidence="4">
    <location>
        <begin position="153"/>
        <end position="155"/>
    </location>
</feature>
<feature type="strand" evidence="4">
    <location>
        <begin position="156"/>
        <end position="158"/>
    </location>
</feature>
<feature type="strand" evidence="4">
    <location>
        <begin position="161"/>
        <end position="170"/>
    </location>
</feature>
<feature type="strand" evidence="4">
    <location>
        <begin position="173"/>
        <end position="184"/>
    </location>
</feature>
<feature type="turn" evidence="4">
    <location>
        <begin position="185"/>
        <end position="188"/>
    </location>
</feature>
<feature type="helix" evidence="4">
    <location>
        <begin position="189"/>
        <end position="207"/>
    </location>
</feature>
<feature type="strand" evidence="4">
    <location>
        <begin position="210"/>
        <end position="224"/>
    </location>
</feature>
<feature type="helix" evidence="4">
    <location>
        <begin position="225"/>
        <end position="227"/>
    </location>
</feature>
<feature type="helix" evidence="4">
    <location>
        <begin position="228"/>
        <end position="236"/>
    </location>
</feature>
<feature type="strand" evidence="4">
    <location>
        <begin position="244"/>
        <end position="247"/>
    </location>
</feature>
<feature type="helix" evidence="4">
    <location>
        <begin position="254"/>
        <end position="256"/>
    </location>
</feature>
<feature type="helix" evidence="4">
    <location>
        <begin position="259"/>
        <end position="261"/>
    </location>
</feature>
<feature type="strand" evidence="4">
    <location>
        <begin position="262"/>
        <end position="266"/>
    </location>
</feature>
<accession>P0CI79</accession>
<accession>O30395</accession>
<accession>O30396</accession>
<accession>P42326</accession>
<sequence>MTQFDKQYNSIIKDIINNGISDEEFDVRTKWDSDGTPAHTLSVISKQMRFDNSEVPILTTKKVAWKTAIKELLWIWQLKSNDVNDLNMMGVHIWDQWKQEDGTIGHAYGFQLGKKNRSLNGEKVDQVDYLLHQLKNNPSSRRHITMLWNPDELDAMALTPCVYETQWYVKHGKLHLEVRARSNDMALGNPFNVFQYNVLQRMIAQVTGYELGEYIFNIGDCHVYTRHIDNLKIQMEREQFEAPELWINPEVKDFYDFTIDDFKLINYKHGDKLLFEVAV</sequence>
<organism>
    <name type="scientific">Bacillus subtilis (strain 168)</name>
    <dbReference type="NCBI Taxonomy" id="224308"/>
    <lineage>
        <taxon>Bacteria</taxon>
        <taxon>Bacillati</taxon>
        <taxon>Bacillota</taxon>
        <taxon>Bacilli</taxon>
        <taxon>Bacillales</taxon>
        <taxon>Bacillaceae</taxon>
        <taxon>Bacillus</taxon>
    </lineage>
</organism>
<comment type="function">
    <text evidence="1">Catalyzes the reductive methylation of 2'-deoxyuridine-5'-monophosphate (dUMP) to 2'-deoxythymidine-5'-monophosphate (dTMP) while utilizing 5,10-methylenetetrahydrofolate (mTHF) as the methyl donor and reductant in the reaction, yielding dihydrofolate (DHF) as a by-product. This enzymatic reaction provides an intracellular de novo source of dTMP, an essential precursor for DNA biosynthesis.</text>
</comment>
<comment type="catalytic activity">
    <reaction evidence="1">
        <text>dUMP + (6R)-5,10-methylene-5,6,7,8-tetrahydrofolate = 7,8-dihydrofolate + dTMP</text>
        <dbReference type="Rhea" id="RHEA:12104"/>
        <dbReference type="ChEBI" id="CHEBI:15636"/>
        <dbReference type="ChEBI" id="CHEBI:57451"/>
        <dbReference type="ChEBI" id="CHEBI:63528"/>
        <dbReference type="ChEBI" id="CHEBI:246422"/>
        <dbReference type="EC" id="2.1.1.45"/>
    </reaction>
</comment>
<comment type="biophysicochemical properties">
    <temperatureDependence>
        <text>Thermostable. Active at 46 degrees Celsius.</text>
    </temperatureDependence>
</comment>
<comment type="pathway">
    <text evidence="1">Pyrimidine metabolism; dTTP biosynthesis.</text>
</comment>
<comment type="subunit">
    <text evidence="1">Homodimer.</text>
</comment>
<comment type="subcellular location">
    <subcellularLocation>
        <location evidence="1">Cytoplasm</location>
    </subcellularLocation>
</comment>
<comment type="miscellaneous">
    <text>B.subtilis strain 168 possesses two thymidylate synthases, a major form ThyA and a minor form ThyB.</text>
</comment>
<comment type="similarity">
    <text evidence="1">Belongs to the thymidylate synthase family. Bacterial-type ThyA subfamily.</text>
</comment>
<proteinExistence type="evidence at protein level"/>
<reference key="1">
    <citation type="journal article" date="1995" name="Microbiology">
        <title>The thyA gene from Bacillus subtilis exhibits similarity with the phage phi 3T thymidylate synthase gene.</title>
        <authorList>
            <person name="Tam N.H."/>
            <person name="Borriss R."/>
        </authorList>
    </citation>
    <scope>NUCLEOTIDE SEQUENCE [GENOMIC DNA]</scope>
    <source>
        <strain>168</strain>
    </source>
</reference>
<reference key="2">
    <citation type="journal article" date="1997" name="Nature">
        <title>The complete genome sequence of the Gram-positive bacterium Bacillus subtilis.</title>
        <authorList>
            <person name="Kunst F."/>
            <person name="Ogasawara N."/>
            <person name="Moszer I."/>
            <person name="Albertini A.M."/>
            <person name="Alloni G."/>
            <person name="Azevedo V."/>
            <person name="Bertero M.G."/>
            <person name="Bessieres P."/>
            <person name="Bolotin A."/>
            <person name="Borchert S."/>
            <person name="Borriss R."/>
            <person name="Boursier L."/>
            <person name="Brans A."/>
            <person name="Braun M."/>
            <person name="Brignell S.C."/>
            <person name="Bron S."/>
            <person name="Brouillet S."/>
            <person name="Bruschi C.V."/>
            <person name="Caldwell B."/>
            <person name="Capuano V."/>
            <person name="Carter N.M."/>
            <person name="Choi S.-K."/>
            <person name="Codani J.-J."/>
            <person name="Connerton I.F."/>
            <person name="Cummings N.J."/>
            <person name="Daniel R.A."/>
            <person name="Denizot F."/>
            <person name="Devine K.M."/>
            <person name="Duesterhoeft A."/>
            <person name="Ehrlich S.D."/>
            <person name="Emmerson P.T."/>
            <person name="Entian K.-D."/>
            <person name="Errington J."/>
            <person name="Fabret C."/>
            <person name="Ferrari E."/>
            <person name="Foulger D."/>
            <person name="Fritz C."/>
            <person name="Fujita M."/>
            <person name="Fujita Y."/>
            <person name="Fuma S."/>
            <person name="Galizzi A."/>
            <person name="Galleron N."/>
            <person name="Ghim S.-Y."/>
            <person name="Glaser P."/>
            <person name="Goffeau A."/>
            <person name="Golightly E.J."/>
            <person name="Grandi G."/>
            <person name="Guiseppi G."/>
            <person name="Guy B.J."/>
            <person name="Haga K."/>
            <person name="Haiech J."/>
            <person name="Harwood C.R."/>
            <person name="Henaut A."/>
            <person name="Hilbert H."/>
            <person name="Holsappel S."/>
            <person name="Hosono S."/>
            <person name="Hullo M.-F."/>
            <person name="Itaya M."/>
            <person name="Jones L.-M."/>
            <person name="Joris B."/>
            <person name="Karamata D."/>
            <person name="Kasahara Y."/>
            <person name="Klaerr-Blanchard M."/>
            <person name="Klein C."/>
            <person name="Kobayashi Y."/>
            <person name="Koetter P."/>
            <person name="Koningstein G."/>
            <person name="Krogh S."/>
            <person name="Kumano M."/>
            <person name="Kurita K."/>
            <person name="Lapidus A."/>
            <person name="Lardinois S."/>
            <person name="Lauber J."/>
            <person name="Lazarevic V."/>
            <person name="Lee S.-M."/>
            <person name="Levine A."/>
            <person name="Liu H."/>
            <person name="Masuda S."/>
            <person name="Mauel C."/>
            <person name="Medigue C."/>
            <person name="Medina N."/>
            <person name="Mellado R.P."/>
            <person name="Mizuno M."/>
            <person name="Moestl D."/>
            <person name="Nakai S."/>
            <person name="Noback M."/>
            <person name="Noone D."/>
            <person name="O'Reilly M."/>
            <person name="Ogawa K."/>
            <person name="Ogiwara A."/>
            <person name="Oudega B."/>
            <person name="Park S.-H."/>
            <person name="Parro V."/>
            <person name="Pohl T.M."/>
            <person name="Portetelle D."/>
            <person name="Porwollik S."/>
            <person name="Prescott A.M."/>
            <person name="Presecan E."/>
            <person name="Pujic P."/>
            <person name="Purnelle B."/>
            <person name="Rapoport G."/>
            <person name="Rey M."/>
            <person name="Reynolds S."/>
            <person name="Rieger M."/>
            <person name="Rivolta C."/>
            <person name="Rocha E."/>
            <person name="Roche B."/>
            <person name="Rose M."/>
            <person name="Sadaie Y."/>
            <person name="Sato T."/>
            <person name="Scanlan E."/>
            <person name="Schleich S."/>
            <person name="Schroeter R."/>
            <person name="Scoffone F."/>
            <person name="Sekiguchi J."/>
            <person name="Sekowska A."/>
            <person name="Seror S.J."/>
            <person name="Serror P."/>
            <person name="Shin B.-S."/>
            <person name="Soldo B."/>
            <person name="Sorokin A."/>
            <person name="Tacconi E."/>
            <person name="Takagi T."/>
            <person name="Takahashi H."/>
            <person name="Takemaru K."/>
            <person name="Takeuchi M."/>
            <person name="Tamakoshi A."/>
            <person name="Tanaka T."/>
            <person name="Terpstra P."/>
            <person name="Tognoni A."/>
            <person name="Tosato V."/>
            <person name="Uchiyama S."/>
            <person name="Vandenbol M."/>
            <person name="Vannier F."/>
            <person name="Vassarotti A."/>
            <person name="Viari A."/>
            <person name="Wambutt R."/>
            <person name="Wedler E."/>
            <person name="Wedler H."/>
            <person name="Weitzenegger T."/>
            <person name="Winters P."/>
            <person name="Wipat A."/>
            <person name="Yamamoto H."/>
            <person name="Yamane K."/>
            <person name="Yasumoto K."/>
            <person name="Yata K."/>
            <person name="Yoshida K."/>
            <person name="Yoshikawa H.-F."/>
            <person name="Zumstein E."/>
            <person name="Yoshikawa H."/>
            <person name="Danchin A."/>
        </authorList>
    </citation>
    <scope>NUCLEOTIDE SEQUENCE [LARGE SCALE GENOMIC DNA]</scope>
    <source>
        <strain>168</strain>
    </source>
</reference>
<reference key="3">
    <citation type="journal article" date="1998" name="Mol. Gen. Genet.">
        <title>Genes encoding thymidylate synthases A and B in the genus Bacillus are members of two distinct families.</title>
        <authorList>
            <person name="Tam N.H."/>
            <person name="Borriss R."/>
        </authorList>
    </citation>
    <scope>NUCLEOTIDE SEQUENCE [GENOMIC DNA] OF 49-279</scope>
    <source>
        <strain>ATCC 6633 / NCIMB 8054 / CCM1999</strain>
    </source>
</reference>
<reference key="4">
    <citation type="journal article" date="1998" name="Biochemistry">
        <title>Crystal structures of a unique thermal-stable thymidylate synthase from Bacillus subtilis.</title>
        <authorList>
            <person name="Stout T.J."/>
            <person name="Schellenberger U."/>
            <person name="Santi D.V."/>
            <person name="Stroud R.M."/>
        </authorList>
    </citation>
    <scope>X-RAY CRYSTALLOGRAPHY (2.2 ANGSTROMS)</scope>
</reference>
<reference key="5">
    <citation type="journal article" date="1999" name="Protein Sci.">
        <title>Crystal structure of thymidylate synthase A from Bacillus subtilis.</title>
        <authorList>
            <person name="Fox K.M."/>
            <person name="Maley F."/>
            <person name="Garibian A."/>
            <person name="Changchien L.M."/>
            <person name="van Roey P."/>
        </authorList>
    </citation>
    <scope>X-RAY CRYSTALLOGRAPHY (2.5 ANGSTROMS)</scope>
</reference>
<evidence type="ECO:0000255" key="1">
    <source>
        <dbReference type="HAMAP-Rule" id="MF_00008"/>
    </source>
</evidence>
<evidence type="ECO:0000303" key="2">
    <source>
    </source>
</evidence>
<evidence type="ECO:0007829" key="3">
    <source>
        <dbReference type="PDB" id="1BKO"/>
    </source>
</evidence>
<evidence type="ECO:0007829" key="4">
    <source>
        <dbReference type="PDB" id="1BKP"/>
    </source>
</evidence>
<evidence type="ECO:0007829" key="5">
    <source>
        <dbReference type="PDB" id="1BSF"/>
    </source>
</evidence>
<dbReference type="EC" id="2.1.1.45" evidence="1"/>
<dbReference type="EMBL" id="X78560">
    <property type="protein sequence ID" value="CAA55307.1"/>
    <property type="molecule type" value="Genomic_DNA"/>
</dbReference>
<dbReference type="EMBL" id="AL009126">
    <property type="protein sequence ID" value="CAB13652.1"/>
    <property type="molecule type" value="Genomic_DNA"/>
</dbReference>
<dbReference type="EMBL" id="AF004102">
    <property type="protein sequence ID" value="AAC26324.1"/>
    <property type="molecule type" value="Genomic_DNA"/>
</dbReference>
<dbReference type="PIR" id="I40494">
    <property type="entry name" value="I40494"/>
</dbReference>
<dbReference type="RefSeq" id="WP_003244896.1">
    <property type="nucleotide sequence ID" value="NZ_OZ025638.1"/>
</dbReference>
<dbReference type="PDB" id="1B02">
    <property type="method" value="X-ray"/>
    <property type="resolution" value="2.50 A"/>
    <property type="chains" value="A=1-279"/>
</dbReference>
<dbReference type="PDB" id="1BKO">
    <property type="method" value="X-ray"/>
    <property type="resolution" value="2.75 A"/>
    <property type="chains" value="A/B/C/D=2-279"/>
</dbReference>
<dbReference type="PDB" id="1BKP">
    <property type="method" value="X-ray"/>
    <property type="resolution" value="1.70 A"/>
    <property type="chains" value="A/B=2-279"/>
</dbReference>
<dbReference type="PDB" id="1BSF">
    <property type="method" value="X-ray"/>
    <property type="resolution" value="2.20 A"/>
    <property type="chains" value="A/B=2-279"/>
</dbReference>
<dbReference type="PDB" id="1BSP">
    <property type="method" value="X-ray"/>
    <property type="resolution" value="2.50 A"/>
    <property type="chains" value="A/B=2-279"/>
</dbReference>
<dbReference type="PDBsum" id="1B02"/>
<dbReference type="PDBsum" id="1BKO"/>
<dbReference type="PDBsum" id="1BKP"/>
<dbReference type="PDBsum" id="1BSF"/>
<dbReference type="PDBsum" id="1BSP"/>
<dbReference type="SMR" id="P0CI79"/>
<dbReference type="FunCoup" id="P0CI79">
    <property type="interactions" value="67"/>
</dbReference>
<dbReference type="STRING" id="224308.BSU17680"/>
<dbReference type="DrugBank" id="DB03761">
    <property type="generic name" value="5-fluoro-2'-deoxyuridine-5'-monophosphate"/>
</dbReference>
<dbReference type="PaxDb" id="224308-BSU17680"/>
<dbReference type="EnsemblBacteria" id="CAB13652">
    <property type="protein sequence ID" value="CAB13652"/>
    <property type="gene ID" value="BSU_17680"/>
</dbReference>
<dbReference type="GeneID" id="939555"/>
<dbReference type="KEGG" id="bsu:BSU17680"/>
<dbReference type="PATRIC" id="fig|224308.179.peg.1922"/>
<dbReference type="eggNOG" id="COG0207">
    <property type="taxonomic scope" value="Bacteria"/>
</dbReference>
<dbReference type="InParanoid" id="P0CI79"/>
<dbReference type="OrthoDB" id="9774633at2"/>
<dbReference type="PhylomeDB" id="P0CI79"/>
<dbReference type="BioCyc" id="BSUB:BSU17680-MONOMER"/>
<dbReference type="BRENDA" id="2.1.1.45">
    <property type="organism ID" value="658"/>
</dbReference>
<dbReference type="SABIO-RK" id="P0CI79"/>
<dbReference type="UniPathway" id="UPA00575"/>
<dbReference type="EvolutionaryTrace" id="P0CI79"/>
<dbReference type="Proteomes" id="UP000001570">
    <property type="component" value="Chromosome"/>
</dbReference>
<dbReference type="GO" id="GO:0005829">
    <property type="term" value="C:cytosol"/>
    <property type="evidence" value="ECO:0000318"/>
    <property type="project" value="GO_Central"/>
</dbReference>
<dbReference type="GO" id="GO:0004799">
    <property type="term" value="F:thymidylate synthase activity"/>
    <property type="evidence" value="ECO:0000314"/>
    <property type="project" value="CACAO"/>
</dbReference>
<dbReference type="GO" id="GO:0006231">
    <property type="term" value="P:dTMP biosynthetic process"/>
    <property type="evidence" value="ECO:0000318"/>
    <property type="project" value="GO_Central"/>
</dbReference>
<dbReference type="GO" id="GO:0006235">
    <property type="term" value="P:dTTP biosynthetic process"/>
    <property type="evidence" value="ECO:0007669"/>
    <property type="project" value="UniProtKB-UniRule"/>
</dbReference>
<dbReference type="GO" id="GO:0032259">
    <property type="term" value="P:methylation"/>
    <property type="evidence" value="ECO:0007669"/>
    <property type="project" value="UniProtKB-KW"/>
</dbReference>
<dbReference type="CDD" id="cd00351">
    <property type="entry name" value="TS_Pyrimidine_HMase"/>
    <property type="match status" value="1"/>
</dbReference>
<dbReference type="FunFam" id="3.30.572.10:FF:000010">
    <property type="entry name" value="Thymidylate synthase 1"/>
    <property type="match status" value="1"/>
</dbReference>
<dbReference type="Gene3D" id="3.30.572.10">
    <property type="entry name" value="Thymidylate synthase/dCMP hydroxymethylase domain"/>
    <property type="match status" value="1"/>
</dbReference>
<dbReference type="HAMAP" id="MF_00008">
    <property type="entry name" value="Thymidy_synth_bact"/>
    <property type="match status" value="1"/>
</dbReference>
<dbReference type="InterPro" id="IPR045097">
    <property type="entry name" value="Thymidate_synth/dCMP_Mease"/>
</dbReference>
<dbReference type="InterPro" id="IPR023451">
    <property type="entry name" value="Thymidate_synth/dCMP_Mease_dom"/>
</dbReference>
<dbReference type="InterPro" id="IPR036926">
    <property type="entry name" value="Thymidate_synth/dCMP_Mease_sf"/>
</dbReference>
<dbReference type="InterPro" id="IPR000398">
    <property type="entry name" value="Thymidylate_synthase"/>
</dbReference>
<dbReference type="InterPro" id="IPR020940">
    <property type="entry name" value="Thymidylate_synthase_AS"/>
</dbReference>
<dbReference type="NCBIfam" id="NF002495">
    <property type="entry name" value="PRK01827.1-1"/>
    <property type="match status" value="1"/>
</dbReference>
<dbReference type="NCBIfam" id="TIGR03284">
    <property type="entry name" value="thym_sym"/>
    <property type="match status" value="1"/>
</dbReference>
<dbReference type="PANTHER" id="PTHR11548">
    <property type="entry name" value="THYMIDYLATE SYNTHASE 1"/>
    <property type="match status" value="1"/>
</dbReference>
<dbReference type="PANTHER" id="PTHR11548:SF1">
    <property type="entry name" value="THYMIDYLATE SYNTHASE 1"/>
    <property type="match status" value="1"/>
</dbReference>
<dbReference type="Pfam" id="PF00303">
    <property type="entry name" value="Thymidylat_synt"/>
    <property type="match status" value="1"/>
</dbReference>
<dbReference type="PRINTS" id="PR00108">
    <property type="entry name" value="THYMDSNTHASE"/>
</dbReference>
<dbReference type="SUPFAM" id="SSF55831">
    <property type="entry name" value="Thymidylate synthase/dCMP hydroxymethylase"/>
    <property type="match status" value="1"/>
</dbReference>
<dbReference type="PROSITE" id="PS00091">
    <property type="entry name" value="THYMIDYLATE_SYNTHASE"/>
    <property type="match status" value="1"/>
</dbReference>